<feature type="chain" id="PRO_1000090747" description="Ribosome-recycling factor">
    <location>
        <begin position="1"/>
        <end position="185"/>
    </location>
</feature>
<gene>
    <name evidence="1" type="primary">frr</name>
    <name type="ordered locus">Helmi_21900</name>
    <name type="ORF">HM1_2259</name>
</gene>
<dbReference type="EMBL" id="CP000930">
    <property type="protein sequence ID" value="ABZ84815.1"/>
    <property type="molecule type" value="Genomic_DNA"/>
</dbReference>
<dbReference type="RefSeq" id="WP_012283314.1">
    <property type="nucleotide sequence ID" value="NC_010337.2"/>
</dbReference>
<dbReference type="SMR" id="B0THE0"/>
<dbReference type="STRING" id="498761.HM1_2259"/>
<dbReference type="KEGG" id="hmo:HM1_2259"/>
<dbReference type="eggNOG" id="COG0233">
    <property type="taxonomic scope" value="Bacteria"/>
</dbReference>
<dbReference type="HOGENOM" id="CLU_073981_2_0_9"/>
<dbReference type="OrthoDB" id="9804006at2"/>
<dbReference type="Proteomes" id="UP000008550">
    <property type="component" value="Chromosome"/>
</dbReference>
<dbReference type="GO" id="GO:0005737">
    <property type="term" value="C:cytoplasm"/>
    <property type="evidence" value="ECO:0007669"/>
    <property type="project" value="UniProtKB-SubCell"/>
</dbReference>
<dbReference type="GO" id="GO:0043023">
    <property type="term" value="F:ribosomal large subunit binding"/>
    <property type="evidence" value="ECO:0007669"/>
    <property type="project" value="TreeGrafter"/>
</dbReference>
<dbReference type="GO" id="GO:0006415">
    <property type="term" value="P:translational termination"/>
    <property type="evidence" value="ECO:0007669"/>
    <property type="project" value="UniProtKB-UniRule"/>
</dbReference>
<dbReference type="CDD" id="cd00520">
    <property type="entry name" value="RRF"/>
    <property type="match status" value="1"/>
</dbReference>
<dbReference type="FunFam" id="1.10.132.20:FF:000001">
    <property type="entry name" value="Ribosome-recycling factor"/>
    <property type="match status" value="1"/>
</dbReference>
<dbReference type="FunFam" id="3.30.1360.40:FF:000001">
    <property type="entry name" value="Ribosome-recycling factor"/>
    <property type="match status" value="1"/>
</dbReference>
<dbReference type="Gene3D" id="3.30.1360.40">
    <property type="match status" value="1"/>
</dbReference>
<dbReference type="Gene3D" id="1.10.132.20">
    <property type="entry name" value="Ribosome-recycling factor"/>
    <property type="match status" value="1"/>
</dbReference>
<dbReference type="HAMAP" id="MF_00040">
    <property type="entry name" value="RRF"/>
    <property type="match status" value="1"/>
</dbReference>
<dbReference type="InterPro" id="IPR002661">
    <property type="entry name" value="Ribosome_recyc_fac"/>
</dbReference>
<dbReference type="InterPro" id="IPR023584">
    <property type="entry name" value="Ribosome_recyc_fac_dom"/>
</dbReference>
<dbReference type="InterPro" id="IPR036191">
    <property type="entry name" value="RRF_sf"/>
</dbReference>
<dbReference type="NCBIfam" id="TIGR00496">
    <property type="entry name" value="frr"/>
    <property type="match status" value="1"/>
</dbReference>
<dbReference type="PANTHER" id="PTHR20982:SF3">
    <property type="entry name" value="MITOCHONDRIAL RIBOSOME RECYCLING FACTOR PSEUDO 1"/>
    <property type="match status" value="1"/>
</dbReference>
<dbReference type="PANTHER" id="PTHR20982">
    <property type="entry name" value="RIBOSOME RECYCLING FACTOR"/>
    <property type="match status" value="1"/>
</dbReference>
<dbReference type="Pfam" id="PF01765">
    <property type="entry name" value="RRF"/>
    <property type="match status" value="1"/>
</dbReference>
<dbReference type="SUPFAM" id="SSF55194">
    <property type="entry name" value="Ribosome recycling factor, RRF"/>
    <property type="match status" value="1"/>
</dbReference>
<reference key="1">
    <citation type="journal article" date="2008" name="J. Bacteriol.">
        <title>The genome of Heliobacterium modesticaldum, a phototrophic representative of the Firmicutes containing the simplest photosynthetic apparatus.</title>
        <authorList>
            <person name="Sattley W.M."/>
            <person name="Madigan M.T."/>
            <person name="Swingley W.D."/>
            <person name="Cheung P.C."/>
            <person name="Clocksin K.M."/>
            <person name="Conrad A.L."/>
            <person name="Dejesa L.C."/>
            <person name="Honchak B.M."/>
            <person name="Jung D.O."/>
            <person name="Karbach L.E."/>
            <person name="Kurdoglu A."/>
            <person name="Lahiri S."/>
            <person name="Mastrian S.D."/>
            <person name="Page L.E."/>
            <person name="Taylor H.L."/>
            <person name="Wang Z.T."/>
            <person name="Raymond J."/>
            <person name="Chen M."/>
            <person name="Blankenship R.E."/>
            <person name="Touchman J.W."/>
        </authorList>
    </citation>
    <scope>NUCLEOTIDE SEQUENCE [LARGE SCALE GENOMIC DNA]</scope>
    <source>
        <strain>ATCC 51547 / Ice1</strain>
    </source>
</reference>
<keyword id="KW-0963">Cytoplasm</keyword>
<keyword id="KW-0648">Protein biosynthesis</keyword>
<keyword id="KW-1185">Reference proteome</keyword>
<name>RRF_HELMI</name>
<comment type="function">
    <text evidence="1">Responsible for the release of ribosomes from messenger RNA at the termination of protein biosynthesis. May increase the efficiency of translation by recycling ribosomes from one round of translation to another.</text>
</comment>
<comment type="subcellular location">
    <subcellularLocation>
        <location evidence="1">Cytoplasm</location>
    </subcellularLocation>
</comment>
<comment type="similarity">
    <text evidence="1">Belongs to the RRF family.</text>
</comment>
<protein>
    <recommendedName>
        <fullName evidence="1">Ribosome-recycling factor</fullName>
        <shortName evidence="1">RRF</shortName>
    </recommendedName>
    <alternativeName>
        <fullName evidence="1">Ribosome-releasing factor</fullName>
    </alternativeName>
</protein>
<evidence type="ECO:0000255" key="1">
    <source>
        <dbReference type="HAMAP-Rule" id="MF_00040"/>
    </source>
</evidence>
<proteinExistence type="inferred from homology"/>
<accession>B0THE0</accession>
<sequence>MINEIKKETEDKMKKTVEALRKEYQHIRAGRANPALLEKVTVEYYGAPTPVNQLANISAPEARLLVIQPWDKSVLPALEKAILKSDLGLTPTSDGAVIRLVIPQLTQERRSELVKTVKKRAEEHRVILRNLRRDANEDVKDLQKEHIISEDEGKRAQEEIQKLTDKYIREVDQVAERKEAEIMEV</sequence>
<organism>
    <name type="scientific">Heliobacterium modesticaldum (strain ATCC 51547 / Ice1)</name>
    <dbReference type="NCBI Taxonomy" id="498761"/>
    <lineage>
        <taxon>Bacteria</taxon>
        <taxon>Bacillati</taxon>
        <taxon>Bacillota</taxon>
        <taxon>Clostridia</taxon>
        <taxon>Eubacteriales</taxon>
        <taxon>Heliobacteriaceae</taxon>
        <taxon>Heliomicrobium</taxon>
    </lineage>
</organism>